<dbReference type="EMBL" id="AE007869">
    <property type="protein sequence ID" value="AAK87505.2"/>
    <property type="status" value="ALT_INIT"/>
    <property type="molecule type" value="Genomic_DNA"/>
</dbReference>
<dbReference type="PIR" id="AI2789">
    <property type="entry name" value="AI2789"/>
</dbReference>
<dbReference type="PIR" id="H97568">
    <property type="entry name" value="H97568"/>
</dbReference>
<dbReference type="RefSeq" id="NP_354720.2">
    <property type="nucleotide sequence ID" value="NC_003062.2"/>
</dbReference>
<dbReference type="SMR" id="Q8UEM1"/>
<dbReference type="STRING" id="176299.Atu1736"/>
<dbReference type="EnsemblBacteria" id="AAK87505">
    <property type="protein sequence ID" value="AAK87505"/>
    <property type="gene ID" value="Atu1736"/>
</dbReference>
<dbReference type="KEGG" id="atu:Atu1736"/>
<dbReference type="PATRIC" id="fig|176299.10.peg.1747"/>
<dbReference type="eggNOG" id="COG1914">
    <property type="taxonomic scope" value="Bacteria"/>
</dbReference>
<dbReference type="HOGENOM" id="CLU_020088_2_0_5"/>
<dbReference type="OrthoDB" id="9787548at2"/>
<dbReference type="Proteomes" id="UP000000813">
    <property type="component" value="Chromosome circular"/>
</dbReference>
<dbReference type="GO" id="GO:0005886">
    <property type="term" value="C:plasma membrane"/>
    <property type="evidence" value="ECO:0007669"/>
    <property type="project" value="UniProtKB-SubCell"/>
</dbReference>
<dbReference type="GO" id="GO:0015086">
    <property type="term" value="F:cadmium ion transmembrane transporter activity"/>
    <property type="evidence" value="ECO:0007669"/>
    <property type="project" value="TreeGrafter"/>
</dbReference>
<dbReference type="GO" id="GO:0005384">
    <property type="term" value="F:manganese ion transmembrane transporter activity"/>
    <property type="evidence" value="ECO:0007669"/>
    <property type="project" value="TreeGrafter"/>
</dbReference>
<dbReference type="GO" id="GO:0046872">
    <property type="term" value="F:metal ion binding"/>
    <property type="evidence" value="ECO:0007669"/>
    <property type="project" value="UniProtKB-UniRule"/>
</dbReference>
<dbReference type="GO" id="GO:0015293">
    <property type="term" value="F:symporter activity"/>
    <property type="evidence" value="ECO:0007669"/>
    <property type="project" value="UniProtKB-UniRule"/>
</dbReference>
<dbReference type="GO" id="GO:0034755">
    <property type="term" value="P:iron ion transmembrane transport"/>
    <property type="evidence" value="ECO:0007669"/>
    <property type="project" value="TreeGrafter"/>
</dbReference>
<dbReference type="HAMAP" id="MF_00221">
    <property type="entry name" value="NRAMP"/>
    <property type="match status" value="1"/>
</dbReference>
<dbReference type="InterPro" id="IPR001046">
    <property type="entry name" value="NRAMP_fam"/>
</dbReference>
<dbReference type="NCBIfam" id="TIGR01197">
    <property type="entry name" value="nramp"/>
    <property type="match status" value="1"/>
</dbReference>
<dbReference type="NCBIfam" id="NF037982">
    <property type="entry name" value="Nramp_1"/>
    <property type="match status" value="1"/>
</dbReference>
<dbReference type="NCBIfam" id="NF001923">
    <property type="entry name" value="PRK00701.1"/>
    <property type="match status" value="1"/>
</dbReference>
<dbReference type="PANTHER" id="PTHR11706:SF33">
    <property type="entry name" value="NATURAL RESISTANCE-ASSOCIATED MACROPHAGE PROTEIN 2"/>
    <property type="match status" value="1"/>
</dbReference>
<dbReference type="PANTHER" id="PTHR11706">
    <property type="entry name" value="SOLUTE CARRIER PROTEIN FAMILY 11 MEMBER"/>
    <property type="match status" value="1"/>
</dbReference>
<dbReference type="Pfam" id="PF01566">
    <property type="entry name" value="Nramp"/>
    <property type="match status" value="1"/>
</dbReference>
<dbReference type="PRINTS" id="PR00447">
    <property type="entry name" value="NATRESASSCMP"/>
</dbReference>
<protein>
    <recommendedName>
        <fullName evidence="1">Divalent metal cation transporter MntH</fullName>
    </recommendedName>
</protein>
<accession>Q8UEM1</accession>
<reference key="1">
    <citation type="journal article" date="2001" name="Science">
        <title>The genome of the natural genetic engineer Agrobacterium tumefaciens C58.</title>
        <authorList>
            <person name="Wood D.W."/>
            <person name="Setubal J.C."/>
            <person name="Kaul R."/>
            <person name="Monks D.E."/>
            <person name="Kitajima J.P."/>
            <person name="Okura V.K."/>
            <person name="Zhou Y."/>
            <person name="Chen L."/>
            <person name="Wood G.E."/>
            <person name="Almeida N.F. Jr."/>
            <person name="Woo L."/>
            <person name="Chen Y."/>
            <person name="Paulsen I.T."/>
            <person name="Eisen J.A."/>
            <person name="Karp P.D."/>
            <person name="Bovee D. Sr."/>
            <person name="Chapman P."/>
            <person name="Clendenning J."/>
            <person name="Deatherage G."/>
            <person name="Gillet W."/>
            <person name="Grant C."/>
            <person name="Kutyavin T."/>
            <person name="Levy R."/>
            <person name="Li M.-J."/>
            <person name="McClelland E."/>
            <person name="Palmieri A."/>
            <person name="Raymond C."/>
            <person name="Rouse G."/>
            <person name="Saenphimmachak C."/>
            <person name="Wu Z."/>
            <person name="Romero P."/>
            <person name="Gordon D."/>
            <person name="Zhang S."/>
            <person name="Yoo H."/>
            <person name="Tao Y."/>
            <person name="Biddle P."/>
            <person name="Jung M."/>
            <person name="Krespan W."/>
            <person name="Perry M."/>
            <person name="Gordon-Kamm B."/>
            <person name="Liao L."/>
            <person name="Kim S."/>
            <person name="Hendrick C."/>
            <person name="Zhao Z.-Y."/>
            <person name="Dolan M."/>
            <person name="Chumley F."/>
            <person name="Tingey S.V."/>
            <person name="Tomb J.-F."/>
            <person name="Gordon M.P."/>
            <person name="Olson M.V."/>
            <person name="Nester E.W."/>
        </authorList>
    </citation>
    <scope>NUCLEOTIDE SEQUENCE [LARGE SCALE GENOMIC DNA]</scope>
    <source>
        <strain>C58 / ATCC 33970</strain>
    </source>
</reference>
<reference key="2">
    <citation type="journal article" date="2001" name="Science">
        <title>Genome sequence of the plant pathogen and biotechnology agent Agrobacterium tumefaciens C58.</title>
        <authorList>
            <person name="Goodner B."/>
            <person name="Hinkle G."/>
            <person name="Gattung S."/>
            <person name="Miller N."/>
            <person name="Blanchard M."/>
            <person name="Qurollo B."/>
            <person name="Goldman B.S."/>
            <person name="Cao Y."/>
            <person name="Askenazi M."/>
            <person name="Halling C."/>
            <person name="Mullin L."/>
            <person name="Houmiel K."/>
            <person name="Gordon J."/>
            <person name="Vaudin M."/>
            <person name="Iartchouk O."/>
            <person name="Epp A."/>
            <person name="Liu F."/>
            <person name="Wollam C."/>
            <person name="Allinger M."/>
            <person name="Doughty D."/>
            <person name="Scott C."/>
            <person name="Lappas C."/>
            <person name="Markelz B."/>
            <person name="Flanagan C."/>
            <person name="Crowell C."/>
            <person name="Gurson J."/>
            <person name="Lomo C."/>
            <person name="Sear C."/>
            <person name="Strub G."/>
            <person name="Cielo C."/>
            <person name="Slater S."/>
        </authorList>
    </citation>
    <scope>NUCLEOTIDE SEQUENCE [LARGE SCALE GENOMIC DNA]</scope>
    <source>
        <strain>C58 / ATCC 33970</strain>
    </source>
</reference>
<name>MNTH_AGRFC</name>
<evidence type="ECO:0000255" key="1">
    <source>
        <dbReference type="HAMAP-Rule" id="MF_00221"/>
    </source>
</evidence>
<evidence type="ECO:0000305" key="2"/>
<gene>
    <name evidence="1" type="primary">mntH</name>
    <name type="ordered locus">Atu1736</name>
    <name type="ORF">AGR_C_3186</name>
</gene>
<comment type="function">
    <text evidence="1">H(+)-stimulated, divalent metal cation uptake system.</text>
</comment>
<comment type="subcellular location">
    <subcellularLocation>
        <location evidence="1">Cell inner membrane</location>
        <topology evidence="1">Multi-pass membrane protein</topology>
    </subcellularLocation>
</comment>
<comment type="similarity">
    <text evidence="1">Belongs to the NRAMP family.</text>
</comment>
<comment type="sequence caution" evidence="2">
    <conflict type="erroneous initiation">
        <sequence resource="EMBL-CDS" id="AAK87505"/>
    </conflict>
    <text>Truncated N-terminus.</text>
</comment>
<sequence length="461" mass="49460">MFFMRMICNCINSISMKAQKMDKPVFGWRRNGDDLSLSDVHSSIRIKPDASTFRRAMAFFGPGYLVAVGYMDPGNWATSLAGGSKFGYTLLAVALVSNIMAIVLQSLCARLAIASGRDLAQACRDAYPKPVAMVLWLLAEIAIIATDIAEVIGTAIGLNLIFGIPLELGVLITALDVFLILYLQKLGFRWVEALVITLLGVIAVCFAIQLALADPDWGQVILGFAPTTEIVTNPDMLYLALGILGATVMPHNLYLHSGIVQTREIGPTIAEKREALKFATLDSTIALMFALLINASILILAAATFNKTGQTNVAELGEAHSLLAPLLGLAIAPTLFGVALLCCGINSTVTATLAGQIVMEGFLKMRLAPWLRRLITRAIAIVPAAGVTIFYGDSGTGQLLILTQVVLSLQLSFAVFPLVMFTSDKAKMGELRSPLWLSAIAWLIAVVIAALNVKLLMDFMG</sequence>
<proteinExistence type="inferred from homology"/>
<organism>
    <name type="scientific">Agrobacterium fabrum (strain C58 / ATCC 33970)</name>
    <name type="common">Agrobacterium tumefaciens (strain C58)</name>
    <dbReference type="NCBI Taxonomy" id="176299"/>
    <lineage>
        <taxon>Bacteria</taxon>
        <taxon>Pseudomonadati</taxon>
        <taxon>Pseudomonadota</taxon>
        <taxon>Alphaproteobacteria</taxon>
        <taxon>Hyphomicrobiales</taxon>
        <taxon>Rhizobiaceae</taxon>
        <taxon>Rhizobium/Agrobacterium group</taxon>
        <taxon>Agrobacterium</taxon>
        <taxon>Agrobacterium tumefaciens complex</taxon>
    </lineage>
</organism>
<feature type="chain" id="PRO_0000212609" description="Divalent metal cation transporter MntH">
    <location>
        <begin position="1"/>
        <end position="461"/>
    </location>
</feature>
<feature type="transmembrane region" description="Helical" evidence="1">
    <location>
        <begin position="56"/>
        <end position="76"/>
    </location>
</feature>
<feature type="transmembrane region" description="Helical" evidence="1">
    <location>
        <begin position="89"/>
        <end position="109"/>
    </location>
</feature>
<feature type="transmembrane region" description="Helical" evidence="1">
    <location>
        <begin position="132"/>
        <end position="152"/>
    </location>
</feature>
<feature type="transmembrane region" description="Helical" evidence="1">
    <location>
        <begin position="160"/>
        <end position="180"/>
    </location>
</feature>
<feature type="transmembrane region" description="Helical" evidence="1">
    <location>
        <begin position="193"/>
        <end position="213"/>
    </location>
</feature>
<feature type="transmembrane region" description="Helical" evidence="1">
    <location>
        <begin position="230"/>
        <end position="250"/>
    </location>
</feature>
<feature type="transmembrane region" description="Helical" evidence="1">
    <location>
        <begin position="285"/>
        <end position="305"/>
    </location>
</feature>
<feature type="transmembrane region" description="Helical" evidence="1">
    <location>
        <begin position="322"/>
        <end position="342"/>
    </location>
</feature>
<feature type="transmembrane region" description="Helical" evidence="1">
    <location>
        <begin position="378"/>
        <end position="398"/>
    </location>
</feature>
<feature type="transmembrane region" description="Helical" evidence="1">
    <location>
        <begin position="399"/>
        <end position="419"/>
    </location>
</feature>
<feature type="transmembrane region" description="Helical" evidence="1">
    <location>
        <begin position="433"/>
        <end position="453"/>
    </location>
</feature>
<keyword id="KW-0997">Cell inner membrane</keyword>
<keyword id="KW-1003">Cell membrane</keyword>
<keyword id="KW-0406">Ion transport</keyword>
<keyword id="KW-0472">Membrane</keyword>
<keyword id="KW-1185">Reference proteome</keyword>
<keyword id="KW-0769">Symport</keyword>
<keyword id="KW-0812">Transmembrane</keyword>
<keyword id="KW-1133">Transmembrane helix</keyword>
<keyword id="KW-0813">Transport</keyword>